<dbReference type="EMBL" id="CP001600">
    <property type="protein sequence ID" value="ACR69589.1"/>
    <property type="molecule type" value="Genomic_DNA"/>
</dbReference>
<dbReference type="RefSeq" id="WP_015871705.1">
    <property type="nucleotide sequence ID" value="NZ_CP169062.1"/>
</dbReference>
<dbReference type="SMR" id="C5BAA9"/>
<dbReference type="STRING" id="67780.B6E78_04245"/>
<dbReference type="GeneID" id="69539339"/>
<dbReference type="KEGG" id="eic:NT01EI_2419"/>
<dbReference type="PATRIC" id="fig|634503.3.peg.2143"/>
<dbReference type="HOGENOM" id="CLU_147249_0_2_6"/>
<dbReference type="OrthoDB" id="8909229at2"/>
<dbReference type="Proteomes" id="UP000001485">
    <property type="component" value="Chromosome"/>
</dbReference>
<dbReference type="GO" id="GO:0009425">
    <property type="term" value="C:bacterial-type flagellum basal body"/>
    <property type="evidence" value="ECO:0007669"/>
    <property type="project" value="UniProtKB-SubCell"/>
</dbReference>
<dbReference type="GO" id="GO:0003774">
    <property type="term" value="F:cytoskeletal motor activity"/>
    <property type="evidence" value="ECO:0007669"/>
    <property type="project" value="InterPro"/>
</dbReference>
<dbReference type="GO" id="GO:0005198">
    <property type="term" value="F:structural molecule activity"/>
    <property type="evidence" value="ECO:0007669"/>
    <property type="project" value="InterPro"/>
</dbReference>
<dbReference type="GO" id="GO:0071973">
    <property type="term" value="P:bacterial-type flagellum-dependent cell motility"/>
    <property type="evidence" value="ECO:0007669"/>
    <property type="project" value="InterPro"/>
</dbReference>
<dbReference type="HAMAP" id="MF_00724">
    <property type="entry name" value="FliE"/>
    <property type="match status" value="1"/>
</dbReference>
<dbReference type="InterPro" id="IPR001624">
    <property type="entry name" value="FliE"/>
</dbReference>
<dbReference type="NCBIfam" id="TIGR00205">
    <property type="entry name" value="fliE"/>
    <property type="match status" value="1"/>
</dbReference>
<dbReference type="PANTHER" id="PTHR34653">
    <property type="match status" value="1"/>
</dbReference>
<dbReference type="PANTHER" id="PTHR34653:SF1">
    <property type="entry name" value="FLAGELLAR HOOK-BASAL BODY COMPLEX PROTEIN FLIE"/>
    <property type="match status" value="1"/>
</dbReference>
<dbReference type="Pfam" id="PF02049">
    <property type="entry name" value="FliE"/>
    <property type="match status" value="1"/>
</dbReference>
<dbReference type="PRINTS" id="PR01006">
    <property type="entry name" value="FLGHOOKFLIE"/>
</dbReference>
<gene>
    <name evidence="1" type="primary">fliE</name>
    <name type="ordered locus">NT01EI_2419</name>
</gene>
<protein>
    <recommendedName>
        <fullName evidence="1">Flagellar hook-basal body complex protein FliE</fullName>
    </recommendedName>
</protein>
<organism>
    <name type="scientific">Edwardsiella ictaluri (strain 93-146)</name>
    <dbReference type="NCBI Taxonomy" id="634503"/>
    <lineage>
        <taxon>Bacteria</taxon>
        <taxon>Pseudomonadati</taxon>
        <taxon>Pseudomonadota</taxon>
        <taxon>Gammaproteobacteria</taxon>
        <taxon>Enterobacterales</taxon>
        <taxon>Hafniaceae</taxon>
        <taxon>Edwardsiella</taxon>
    </lineage>
</organism>
<name>FLIE_EDWI9</name>
<comment type="subcellular location">
    <subcellularLocation>
        <location evidence="1">Bacterial flagellum basal body</location>
    </subcellularLocation>
</comment>
<comment type="similarity">
    <text evidence="1">Belongs to the FliE family.</text>
</comment>
<evidence type="ECO:0000255" key="1">
    <source>
        <dbReference type="HAMAP-Rule" id="MF_00724"/>
    </source>
</evidence>
<accession>C5BAA9</accession>
<feature type="chain" id="PRO_1000212723" description="Flagellar hook-basal body complex protein FliE">
    <location>
        <begin position="1"/>
        <end position="104"/>
    </location>
</feature>
<proteinExistence type="inferred from homology"/>
<keyword id="KW-0975">Bacterial flagellum</keyword>
<sequence length="104" mass="11176">MAVTGIENVLQQLQATALSAANGTPQDGVAQGTFSSELKAAIDRISDNQNHARLQAQQFEMGVPGVALNDVMLDMQKSSVSLQMGVQVRNRLVAAYQDIMNMQV</sequence>
<reference key="1">
    <citation type="submission" date="2009-03" db="EMBL/GenBank/DDBJ databases">
        <title>Complete genome sequence of Edwardsiella ictaluri 93-146.</title>
        <authorList>
            <person name="Williams M.L."/>
            <person name="Gillaspy A.F."/>
            <person name="Dyer D.W."/>
            <person name="Thune R.L."/>
            <person name="Waldbieser G.C."/>
            <person name="Schuster S.C."/>
            <person name="Gipson J."/>
            <person name="Zaitshik J."/>
            <person name="Landry C."/>
            <person name="Lawrence M.L."/>
        </authorList>
    </citation>
    <scope>NUCLEOTIDE SEQUENCE [LARGE SCALE GENOMIC DNA]</scope>
    <source>
        <strain>93-146</strain>
    </source>
</reference>